<evidence type="ECO:0000255" key="1">
    <source>
        <dbReference type="HAMAP-Rule" id="MF_01013"/>
    </source>
</evidence>
<dbReference type="EC" id="4.3.2.10" evidence="1"/>
<dbReference type="EMBL" id="AP008230">
    <property type="protein sequence ID" value="BAE85697.1"/>
    <property type="molecule type" value="Genomic_DNA"/>
</dbReference>
<dbReference type="SMR" id="Q24QJ5"/>
<dbReference type="STRING" id="138119.DSY3908"/>
<dbReference type="KEGG" id="dsy:DSY3908"/>
<dbReference type="eggNOG" id="COG0107">
    <property type="taxonomic scope" value="Bacteria"/>
</dbReference>
<dbReference type="HOGENOM" id="CLU_048577_4_0_9"/>
<dbReference type="UniPathway" id="UPA00031">
    <property type="reaction ID" value="UER00010"/>
</dbReference>
<dbReference type="Proteomes" id="UP000001946">
    <property type="component" value="Chromosome"/>
</dbReference>
<dbReference type="GO" id="GO:0005737">
    <property type="term" value="C:cytoplasm"/>
    <property type="evidence" value="ECO:0007669"/>
    <property type="project" value="UniProtKB-SubCell"/>
</dbReference>
<dbReference type="GO" id="GO:0000107">
    <property type="term" value="F:imidazoleglycerol-phosphate synthase activity"/>
    <property type="evidence" value="ECO:0007669"/>
    <property type="project" value="UniProtKB-UniRule"/>
</dbReference>
<dbReference type="GO" id="GO:0016829">
    <property type="term" value="F:lyase activity"/>
    <property type="evidence" value="ECO:0007669"/>
    <property type="project" value="UniProtKB-KW"/>
</dbReference>
<dbReference type="GO" id="GO:0000105">
    <property type="term" value="P:L-histidine biosynthetic process"/>
    <property type="evidence" value="ECO:0007669"/>
    <property type="project" value="UniProtKB-UniRule"/>
</dbReference>
<dbReference type="CDD" id="cd04731">
    <property type="entry name" value="HisF"/>
    <property type="match status" value="1"/>
</dbReference>
<dbReference type="FunFam" id="3.20.20.70:FF:000006">
    <property type="entry name" value="Imidazole glycerol phosphate synthase subunit HisF"/>
    <property type="match status" value="1"/>
</dbReference>
<dbReference type="Gene3D" id="3.20.20.70">
    <property type="entry name" value="Aldolase class I"/>
    <property type="match status" value="1"/>
</dbReference>
<dbReference type="HAMAP" id="MF_01013">
    <property type="entry name" value="HisF"/>
    <property type="match status" value="1"/>
</dbReference>
<dbReference type="InterPro" id="IPR013785">
    <property type="entry name" value="Aldolase_TIM"/>
</dbReference>
<dbReference type="InterPro" id="IPR006062">
    <property type="entry name" value="His_biosynth"/>
</dbReference>
<dbReference type="InterPro" id="IPR004651">
    <property type="entry name" value="HisF"/>
</dbReference>
<dbReference type="InterPro" id="IPR050064">
    <property type="entry name" value="IGPS_HisA/HisF"/>
</dbReference>
<dbReference type="InterPro" id="IPR011060">
    <property type="entry name" value="RibuloseP-bd_barrel"/>
</dbReference>
<dbReference type="NCBIfam" id="TIGR00735">
    <property type="entry name" value="hisF"/>
    <property type="match status" value="1"/>
</dbReference>
<dbReference type="PANTHER" id="PTHR21235:SF2">
    <property type="entry name" value="IMIDAZOLE GLYCEROL PHOSPHATE SYNTHASE HISHF"/>
    <property type="match status" value="1"/>
</dbReference>
<dbReference type="PANTHER" id="PTHR21235">
    <property type="entry name" value="IMIDAZOLE GLYCEROL PHOSPHATE SYNTHASE SUBUNIT HISF/H IGP SYNTHASE SUBUNIT HISF/H"/>
    <property type="match status" value="1"/>
</dbReference>
<dbReference type="Pfam" id="PF00977">
    <property type="entry name" value="His_biosynth"/>
    <property type="match status" value="1"/>
</dbReference>
<dbReference type="SUPFAM" id="SSF51366">
    <property type="entry name" value="Ribulose-phoshate binding barrel"/>
    <property type="match status" value="1"/>
</dbReference>
<keyword id="KW-0028">Amino-acid biosynthesis</keyword>
<keyword id="KW-0963">Cytoplasm</keyword>
<keyword id="KW-0368">Histidine biosynthesis</keyword>
<keyword id="KW-0456">Lyase</keyword>
<keyword id="KW-1185">Reference proteome</keyword>
<proteinExistence type="inferred from homology"/>
<feature type="chain" id="PRO_0000319456" description="Imidazole glycerol phosphate synthase subunit HisF">
    <location>
        <begin position="1"/>
        <end position="254"/>
    </location>
</feature>
<feature type="active site" evidence="1">
    <location>
        <position position="12"/>
    </location>
</feature>
<feature type="active site" evidence="1">
    <location>
        <position position="131"/>
    </location>
</feature>
<organism>
    <name type="scientific">Desulfitobacterium hafniense (strain Y51)</name>
    <dbReference type="NCBI Taxonomy" id="138119"/>
    <lineage>
        <taxon>Bacteria</taxon>
        <taxon>Bacillati</taxon>
        <taxon>Bacillota</taxon>
        <taxon>Clostridia</taxon>
        <taxon>Eubacteriales</taxon>
        <taxon>Desulfitobacteriaceae</taxon>
        <taxon>Desulfitobacterium</taxon>
    </lineage>
</organism>
<sequence length="254" mass="27414">MMLAKRIIPCLDVHEGRVVKGTNFVNLRDAGDPVELAALYDREGADELVFLDISASAEGRETMVEVVRRTAEQVFIPFTIGGGLRRVEDIRKMLRAGADKVSLNTSAVQTPGLIEEGAHAFGSQCIVVAIDARQTRPGAWEVYIHGGRTPTGKDVLQWAEEVERLGAGEILLTSMNRDGTKNGYDLELTRAVSRAVSLPVIASGGVGTLEHLAEGLTIGEADAVLAASIFHYQEYSIGEAKAYLEERGIPVRKG</sequence>
<reference key="1">
    <citation type="journal article" date="2006" name="J. Bacteriol.">
        <title>Complete genome sequence of the dehalorespiring bacterium Desulfitobacterium hafniense Y51 and comparison with Dehalococcoides ethenogenes 195.</title>
        <authorList>
            <person name="Nonaka H."/>
            <person name="Keresztes G."/>
            <person name="Shinoda Y."/>
            <person name="Ikenaga Y."/>
            <person name="Abe M."/>
            <person name="Naito K."/>
            <person name="Inatomi K."/>
            <person name="Furukawa K."/>
            <person name="Inui M."/>
            <person name="Yukawa H."/>
        </authorList>
    </citation>
    <scope>NUCLEOTIDE SEQUENCE [LARGE SCALE GENOMIC DNA]</scope>
    <source>
        <strain>Y51</strain>
    </source>
</reference>
<accession>Q24QJ5</accession>
<protein>
    <recommendedName>
        <fullName evidence="1">Imidazole glycerol phosphate synthase subunit HisF</fullName>
        <ecNumber evidence="1">4.3.2.10</ecNumber>
    </recommendedName>
    <alternativeName>
        <fullName evidence="1">IGP synthase cyclase subunit</fullName>
    </alternativeName>
    <alternativeName>
        <fullName evidence="1">IGP synthase subunit HisF</fullName>
    </alternativeName>
    <alternativeName>
        <fullName evidence="1">ImGP synthase subunit HisF</fullName>
        <shortName evidence="1">IGPS subunit HisF</shortName>
    </alternativeName>
</protein>
<comment type="function">
    <text evidence="1">IGPS catalyzes the conversion of PRFAR and glutamine to IGP, AICAR and glutamate. The HisF subunit catalyzes the cyclization activity that produces IGP and AICAR from PRFAR using the ammonia provided by the HisH subunit.</text>
</comment>
<comment type="catalytic activity">
    <reaction evidence="1">
        <text>5-[(5-phospho-1-deoxy-D-ribulos-1-ylimino)methylamino]-1-(5-phospho-beta-D-ribosyl)imidazole-4-carboxamide + L-glutamine = D-erythro-1-(imidazol-4-yl)glycerol 3-phosphate + 5-amino-1-(5-phospho-beta-D-ribosyl)imidazole-4-carboxamide + L-glutamate + H(+)</text>
        <dbReference type="Rhea" id="RHEA:24793"/>
        <dbReference type="ChEBI" id="CHEBI:15378"/>
        <dbReference type="ChEBI" id="CHEBI:29985"/>
        <dbReference type="ChEBI" id="CHEBI:58278"/>
        <dbReference type="ChEBI" id="CHEBI:58359"/>
        <dbReference type="ChEBI" id="CHEBI:58475"/>
        <dbReference type="ChEBI" id="CHEBI:58525"/>
        <dbReference type="EC" id="4.3.2.10"/>
    </reaction>
</comment>
<comment type="pathway">
    <text evidence="1">Amino-acid biosynthesis; L-histidine biosynthesis; L-histidine from 5-phospho-alpha-D-ribose 1-diphosphate: step 5/9.</text>
</comment>
<comment type="subunit">
    <text evidence="1">Heterodimer of HisH and HisF.</text>
</comment>
<comment type="subcellular location">
    <subcellularLocation>
        <location evidence="1">Cytoplasm</location>
    </subcellularLocation>
</comment>
<comment type="similarity">
    <text evidence="1">Belongs to the HisA/HisF family.</text>
</comment>
<name>HIS6_DESHY</name>
<gene>
    <name evidence="1" type="primary">hisF</name>
    <name type="ordered locus">DSY3908</name>
</gene>